<evidence type="ECO:0000255" key="1">
    <source>
        <dbReference type="HAMAP-Rule" id="MF_00172"/>
    </source>
</evidence>
<feature type="chain" id="PRO_1000203709" description="5-methyltetrahydropteroyltriglutamate--homocysteine methyltransferase">
    <location>
        <begin position="1"/>
        <end position="762"/>
    </location>
</feature>
<feature type="active site" description="Proton donor" evidence="1">
    <location>
        <position position="698"/>
    </location>
</feature>
<feature type="binding site" evidence="1">
    <location>
        <begin position="17"/>
        <end position="20"/>
    </location>
    <ligand>
        <name>5-methyltetrahydropteroyltri-L-glutamate</name>
        <dbReference type="ChEBI" id="CHEBI:58207"/>
    </ligand>
</feature>
<feature type="binding site" evidence="1">
    <location>
        <position position="111"/>
    </location>
    <ligand>
        <name>5-methyltetrahydropteroyltri-L-glutamate</name>
        <dbReference type="ChEBI" id="CHEBI:58207"/>
    </ligand>
</feature>
<feature type="binding site" evidence="1">
    <location>
        <begin position="435"/>
        <end position="437"/>
    </location>
    <ligand>
        <name>L-homocysteine</name>
        <dbReference type="ChEBI" id="CHEBI:58199"/>
    </ligand>
</feature>
<feature type="binding site" evidence="1">
    <location>
        <begin position="435"/>
        <end position="437"/>
    </location>
    <ligand>
        <name>L-methionine</name>
        <dbReference type="ChEBI" id="CHEBI:57844"/>
    </ligand>
</feature>
<feature type="binding site" evidence="1">
    <location>
        <position position="488"/>
    </location>
    <ligand>
        <name>L-homocysteine</name>
        <dbReference type="ChEBI" id="CHEBI:58199"/>
    </ligand>
</feature>
<feature type="binding site" evidence="1">
    <location>
        <position position="488"/>
    </location>
    <ligand>
        <name>L-methionine</name>
        <dbReference type="ChEBI" id="CHEBI:57844"/>
    </ligand>
</feature>
<feature type="binding site" evidence="1">
    <location>
        <begin position="519"/>
        <end position="520"/>
    </location>
    <ligand>
        <name>5-methyltetrahydropteroyltri-L-glutamate</name>
        <dbReference type="ChEBI" id="CHEBI:58207"/>
    </ligand>
</feature>
<feature type="binding site" evidence="1">
    <location>
        <position position="565"/>
    </location>
    <ligand>
        <name>5-methyltetrahydropteroyltri-L-glutamate</name>
        <dbReference type="ChEBI" id="CHEBI:58207"/>
    </ligand>
</feature>
<feature type="binding site" evidence="1">
    <location>
        <position position="603"/>
    </location>
    <ligand>
        <name>L-homocysteine</name>
        <dbReference type="ChEBI" id="CHEBI:58199"/>
    </ligand>
</feature>
<feature type="binding site" evidence="1">
    <location>
        <position position="603"/>
    </location>
    <ligand>
        <name>L-methionine</name>
        <dbReference type="ChEBI" id="CHEBI:57844"/>
    </ligand>
</feature>
<feature type="binding site" evidence="1">
    <location>
        <position position="609"/>
    </location>
    <ligand>
        <name>5-methyltetrahydropteroyltri-L-glutamate</name>
        <dbReference type="ChEBI" id="CHEBI:58207"/>
    </ligand>
</feature>
<feature type="binding site" evidence="1">
    <location>
        <position position="645"/>
    </location>
    <ligand>
        <name>Zn(2+)</name>
        <dbReference type="ChEBI" id="CHEBI:29105"/>
        <note>catalytic</note>
    </ligand>
</feature>
<feature type="binding site" evidence="1">
    <location>
        <position position="647"/>
    </location>
    <ligand>
        <name>Zn(2+)</name>
        <dbReference type="ChEBI" id="CHEBI:29105"/>
        <note>catalytic</note>
    </ligand>
</feature>
<feature type="binding site" evidence="1">
    <location>
        <position position="669"/>
    </location>
    <ligand>
        <name>Zn(2+)</name>
        <dbReference type="ChEBI" id="CHEBI:29105"/>
        <note>catalytic</note>
    </ligand>
</feature>
<feature type="binding site" evidence="1">
    <location>
        <position position="730"/>
    </location>
    <ligand>
        <name>Zn(2+)</name>
        <dbReference type="ChEBI" id="CHEBI:29105"/>
        <note>catalytic</note>
    </ligand>
</feature>
<protein>
    <recommendedName>
        <fullName evidence="1">5-methyltetrahydropteroyltriglutamate--homocysteine methyltransferase</fullName>
        <ecNumber evidence="1">2.1.1.14</ecNumber>
    </recommendedName>
    <alternativeName>
        <fullName evidence="1">Cobalamin-independent methionine synthase</fullName>
    </alternativeName>
    <alternativeName>
        <fullName evidence="1">Methionine synthase, vitamin-B12 independent isozyme</fullName>
    </alternativeName>
</protein>
<accession>B9IWL4</accession>
<keyword id="KW-0028">Amino-acid biosynthesis</keyword>
<keyword id="KW-0479">Metal-binding</keyword>
<keyword id="KW-0486">Methionine biosynthesis</keyword>
<keyword id="KW-0489">Methyltransferase</keyword>
<keyword id="KW-0677">Repeat</keyword>
<keyword id="KW-0808">Transferase</keyword>
<keyword id="KW-0862">Zinc</keyword>
<comment type="function">
    <text evidence="1">Catalyzes the transfer of a methyl group from 5-methyltetrahydrofolate to homocysteine resulting in methionine formation.</text>
</comment>
<comment type="catalytic activity">
    <reaction evidence="1">
        <text>5-methyltetrahydropteroyltri-L-glutamate + L-homocysteine = tetrahydropteroyltri-L-glutamate + L-methionine</text>
        <dbReference type="Rhea" id="RHEA:21196"/>
        <dbReference type="ChEBI" id="CHEBI:57844"/>
        <dbReference type="ChEBI" id="CHEBI:58140"/>
        <dbReference type="ChEBI" id="CHEBI:58199"/>
        <dbReference type="ChEBI" id="CHEBI:58207"/>
        <dbReference type="EC" id="2.1.1.14"/>
    </reaction>
</comment>
<comment type="cofactor">
    <cofactor evidence="1">
        <name>Zn(2+)</name>
        <dbReference type="ChEBI" id="CHEBI:29105"/>
    </cofactor>
    <text evidence="1">Binds 1 zinc ion per subunit.</text>
</comment>
<comment type="pathway">
    <text evidence="1">Amino-acid biosynthesis; L-methionine biosynthesis via de novo pathway; L-methionine from L-homocysteine (MetE route): step 1/1.</text>
</comment>
<comment type="similarity">
    <text evidence="1">Belongs to the vitamin-B12 independent methionine synthase family.</text>
</comment>
<proteinExistence type="inferred from homology"/>
<reference key="1">
    <citation type="journal article" date="2009" name="J. Bacteriol.">
        <title>Complete genome sequence of the extremophilic Bacillus cereus strain Q1 with industrial applications.</title>
        <authorList>
            <person name="Xiong Z."/>
            <person name="Jiang Y."/>
            <person name="Qi D."/>
            <person name="Lu H."/>
            <person name="Yang F."/>
            <person name="Yang J."/>
            <person name="Chen L."/>
            <person name="Sun L."/>
            <person name="Xu X."/>
            <person name="Xue Y."/>
            <person name="Zhu Y."/>
            <person name="Jin Q."/>
        </authorList>
    </citation>
    <scope>NUCLEOTIDE SEQUENCE [LARGE SCALE GENOMIC DNA]</scope>
    <source>
        <strain>Q1</strain>
    </source>
</reference>
<gene>
    <name evidence="1" type="primary">metE</name>
    <name type="ordered locus">BCQ_3791</name>
</gene>
<sequence length="762" mass="87343">MAIQTSNLGYPRIGLQREWKKTLEAFWSNKIDEEQFLTTMKEIRLKHVKAQQEKGIELIPIGDFTYYDHVLDTAYMLGFIPSRFSEFTSYLDVYFAMARGSKDHVASEMTKWFNTNYHYIVPEYEEGLQISLKDNRPLRLYEEAKQELGVDGKPVILGPYTFLKLAKGYTQEQFATILKQLVAPYVQLLSELHAAGAQIIQVDEPIFASLTKEEVQQAKEIYEAIRKEVPNANLLLQTYFDSVEENYEEIITFPVSSIGLDFIHGKEGNLHAISKYGFPADKTLAVGCIDGRNIWRADLDEVLTLFTTLQKQVQTKNFIVQPSCSLLHTPIDKTEETHLSTELFDALAFANQKLEELVLIHSALTQGTESIRNELETYRNVHHTIRSSAARNREDVKAARTALKEEDFSRPLPFEKRYELQQVALKLPLLPTTTIGSFPQTTEVRQTRKEWRNGVISNEQYEQFIEKETEKWIRYQEEIGLDVLVHGEFERTDMVEYFGERLAGFSFTKNGWVQSYGSRCVKPPVIYGDVAFINGMTIKETVYAQSLTEKVVKGMLTGPVTILNWSFVRNDIPRKEVSYQIALALRHEIELLESSGIRVIQVDEPALREGMPLKEKDWDAYITWAVQSFLLATSSVANETQIHTHMCYSNFEDIVDAIRALDADVISIETSRSHGEFIDTLKHTTYEKGIGLGVYDIHSPRVPSKDEMYKIVEQSLKVCDPKYFWINPDCGLKTRRTEEVIPALEHMVQAAKDARSLLKTNA</sequence>
<organism>
    <name type="scientific">Bacillus cereus (strain Q1)</name>
    <dbReference type="NCBI Taxonomy" id="361100"/>
    <lineage>
        <taxon>Bacteria</taxon>
        <taxon>Bacillati</taxon>
        <taxon>Bacillota</taxon>
        <taxon>Bacilli</taxon>
        <taxon>Bacillales</taxon>
        <taxon>Bacillaceae</taxon>
        <taxon>Bacillus</taxon>
        <taxon>Bacillus cereus group</taxon>
    </lineage>
</organism>
<dbReference type="EC" id="2.1.1.14" evidence="1"/>
<dbReference type="EMBL" id="CP000227">
    <property type="protein sequence ID" value="ACM14219.1"/>
    <property type="molecule type" value="Genomic_DNA"/>
</dbReference>
<dbReference type="SMR" id="B9IWL4"/>
<dbReference type="KEGG" id="bcq:BCQ_3791"/>
<dbReference type="HOGENOM" id="CLU_013175_0_0_9"/>
<dbReference type="UniPathway" id="UPA00051">
    <property type="reaction ID" value="UER00082"/>
</dbReference>
<dbReference type="Proteomes" id="UP000000441">
    <property type="component" value="Chromosome"/>
</dbReference>
<dbReference type="GO" id="GO:0003871">
    <property type="term" value="F:5-methyltetrahydropteroyltriglutamate-homocysteine S-methyltransferase activity"/>
    <property type="evidence" value="ECO:0007669"/>
    <property type="project" value="UniProtKB-UniRule"/>
</dbReference>
<dbReference type="GO" id="GO:0008270">
    <property type="term" value="F:zinc ion binding"/>
    <property type="evidence" value="ECO:0007669"/>
    <property type="project" value="InterPro"/>
</dbReference>
<dbReference type="GO" id="GO:0009086">
    <property type="term" value="P:methionine biosynthetic process"/>
    <property type="evidence" value="ECO:0007669"/>
    <property type="project" value="UniProtKB-UniRule"/>
</dbReference>
<dbReference type="GO" id="GO:0032259">
    <property type="term" value="P:methylation"/>
    <property type="evidence" value="ECO:0007669"/>
    <property type="project" value="UniProtKB-KW"/>
</dbReference>
<dbReference type="CDD" id="cd03311">
    <property type="entry name" value="CIMS_C_terminal_like"/>
    <property type="match status" value="1"/>
</dbReference>
<dbReference type="CDD" id="cd03312">
    <property type="entry name" value="CIMS_N_terminal_like"/>
    <property type="match status" value="1"/>
</dbReference>
<dbReference type="Gene3D" id="3.20.20.210">
    <property type="match status" value="2"/>
</dbReference>
<dbReference type="HAMAP" id="MF_00172">
    <property type="entry name" value="Meth_synth"/>
    <property type="match status" value="1"/>
</dbReference>
<dbReference type="InterPro" id="IPR013215">
    <property type="entry name" value="Cbl-indep_Met_Synth_N"/>
</dbReference>
<dbReference type="InterPro" id="IPR006276">
    <property type="entry name" value="Cobalamin-indep_Met_synthase"/>
</dbReference>
<dbReference type="InterPro" id="IPR002629">
    <property type="entry name" value="Met_Synth_C/arc"/>
</dbReference>
<dbReference type="InterPro" id="IPR038071">
    <property type="entry name" value="UROD/MetE-like_sf"/>
</dbReference>
<dbReference type="NCBIfam" id="TIGR01371">
    <property type="entry name" value="met_syn_B12ind"/>
    <property type="match status" value="1"/>
</dbReference>
<dbReference type="NCBIfam" id="NF003556">
    <property type="entry name" value="PRK05222.1"/>
    <property type="match status" value="1"/>
</dbReference>
<dbReference type="PANTHER" id="PTHR30519">
    <property type="entry name" value="5-METHYLTETRAHYDROPTEROYLTRIGLUTAMATE--HOMOCYSTEINE METHYLTRANSFERASE"/>
    <property type="match status" value="1"/>
</dbReference>
<dbReference type="Pfam" id="PF08267">
    <property type="entry name" value="Meth_synt_1"/>
    <property type="match status" value="1"/>
</dbReference>
<dbReference type="Pfam" id="PF01717">
    <property type="entry name" value="Meth_synt_2"/>
    <property type="match status" value="1"/>
</dbReference>
<dbReference type="PIRSF" id="PIRSF000382">
    <property type="entry name" value="MeTrfase_B12_ind"/>
    <property type="match status" value="1"/>
</dbReference>
<dbReference type="SUPFAM" id="SSF51726">
    <property type="entry name" value="UROD/MetE-like"/>
    <property type="match status" value="2"/>
</dbReference>
<name>METE_BACCQ</name>